<name>CISD1_RAT</name>
<organism>
    <name type="scientific">Rattus norvegicus</name>
    <name type="common">Rat</name>
    <dbReference type="NCBI Taxonomy" id="10116"/>
    <lineage>
        <taxon>Eukaryota</taxon>
        <taxon>Metazoa</taxon>
        <taxon>Chordata</taxon>
        <taxon>Craniata</taxon>
        <taxon>Vertebrata</taxon>
        <taxon>Euteleostomi</taxon>
        <taxon>Mammalia</taxon>
        <taxon>Eutheria</taxon>
        <taxon>Euarchontoglires</taxon>
        <taxon>Glires</taxon>
        <taxon>Rodentia</taxon>
        <taxon>Myomorpha</taxon>
        <taxon>Muroidea</taxon>
        <taxon>Muridae</taxon>
        <taxon>Murinae</taxon>
        <taxon>Rattus</taxon>
    </lineage>
</organism>
<protein>
    <recommendedName>
        <fullName>CDGSH iron-sulfur domain-containing protein 1</fullName>
    </recommendedName>
    <alternativeName>
        <fullName evidence="2">Cysteine transaminase CISD1</fullName>
        <ecNumber evidence="2">2.6.1.3</ecNumber>
    </alternativeName>
    <alternativeName>
        <fullName>MitoNEET</fullName>
    </alternativeName>
</protein>
<proteinExistence type="inferred from homology"/>
<gene>
    <name type="primary">Cisd1</name>
</gene>
<sequence length="108" mass="12097">MGLSSDSPVRVEWIAAVTFAAGTAALGYLAYKKFYAKESRTKAMVNLQIQKDNPKVVHAFDMEDLGDKAVYCRCWRSKKFPFCDGAHIKHNEETGDNVGPLIIKKKET</sequence>
<dbReference type="EC" id="2.6.1.3" evidence="2"/>
<dbReference type="EMBL" id="CH473988">
    <property type="protein sequence ID" value="EDL97255.1"/>
    <property type="molecule type" value="Genomic_DNA"/>
</dbReference>
<dbReference type="EMBL" id="BC159419">
    <property type="protein sequence ID" value="AAI59420.1"/>
    <property type="molecule type" value="mRNA"/>
</dbReference>
<dbReference type="RefSeq" id="NP_001099855.1">
    <property type="nucleotide sequence ID" value="NM_001106385.2"/>
</dbReference>
<dbReference type="SMR" id="B0K020"/>
<dbReference type="BioGRID" id="254688">
    <property type="interactions" value="2"/>
</dbReference>
<dbReference type="FunCoup" id="B0K020">
    <property type="interactions" value="1220"/>
</dbReference>
<dbReference type="IntAct" id="B0K020">
    <property type="interactions" value="1"/>
</dbReference>
<dbReference type="MINT" id="B0K020"/>
<dbReference type="STRING" id="10116.ENSRNOP00000000749"/>
<dbReference type="BindingDB" id="B0K020"/>
<dbReference type="ChEMBL" id="CHEMBL3308979"/>
<dbReference type="DrugCentral" id="B0K020"/>
<dbReference type="CarbonylDB" id="B0K020"/>
<dbReference type="iPTMnet" id="B0K020"/>
<dbReference type="PhosphoSitePlus" id="B0K020"/>
<dbReference type="SwissPalm" id="B0K020"/>
<dbReference type="jPOST" id="B0K020"/>
<dbReference type="PaxDb" id="10116-ENSRNOP00000000749"/>
<dbReference type="PeptideAtlas" id="B0K020"/>
<dbReference type="GeneID" id="294362"/>
<dbReference type="KEGG" id="rno:294362"/>
<dbReference type="UCSC" id="RGD:1309529">
    <property type="organism name" value="rat"/>
</dbReference>
<dbReference type="AGR" id="RGD:1309529"/>
<dbReference type="CTD" id="55847"/>
<dbReference type="RGD" id="1309529">
    <property type="gene designation" value="Cisd1"/>
</dbReference>
<dbReference type="VEuPathDB" id="HostDB:ENSRNOG00000000610"/>
<dbReference type="eggNOG" id="KOG3461">
    <property type="taxonomic scope" value="Eukaryota"/>
</dbReference>
<dbReference type="HOGENOM" id="CLU_132293_1_0_1"/>
<dbReference type="InParanoid" id="B0K020"/>
<dbReference type="OrthoDB" id="449252at2759"/>
<dbReference type="PhylomeDB" id="B0K020"/>
<dbReference type="TreeFam" id="TF324661"/>
<dbReference type="PRO" id="PR:B0K020"/>
<dbReference type="Proteomes" id="UP000002494">
    <property type="component" value="Chromosome 20"/>
</dbReference>
<dbReference type="Proteomes" id="UP000234681">
    <property type="component" value="Chromosome 20"/>
</dbReference>
<dbReference type="Bgee" id="ENSRNOG00000000610">
    <property type="expression patterns" value="Expressed in kidney and 20 other cell types or tissues"/>
</dbReference>
<dbReference type="GO" id="GO:0032473">
    <property type="term" value="C:cytoplasmic side of mitochondrial outer membrane"/>
    <property type="evidence" value="ECO:0000314"/>
    <property type="project" value="UniProtKB"/>
</dbReference>
<dbReference type="GO" id="GO:0005741">
    <property type="term" value="C:mitochondrial outer membrane"/>
    <property type="evidence" value="ECO:0000266"/>
    <property type="project" value="RGD"/>
</dbReference>
<dbReference type="GO" id="GO:0005739">
    <property type="term" value="C:mitochondrion"/>
    <property type="evidence" value="ECO:0000266"/>
    <property type="project" value="RGD"/>
</dbReference>
<dbReference type="GO" id="GO:0051537">
    <property type="term" value="F:2 iron, 2 sulfur cluster binding"/>
    <property type="evidence" value="ECO:0000250"/>
    <property type="project" value="UniProtKB"/>
</dbReference>
<dbReference type="GO" id="GO:0042802">
    <property type="term" value="F:identical protein binding"/>
    <property type="evidence" value="ECO:0000266"/>
    <property type="project" value="RGD"/>
</dbReference>
<dbReference type="GO" id="GO:0047801">
    <property type="term" value="F:L-cysteine transaminase activity"/>
    <property type="evidence" value="ECO:0000250"/>
    <property type="project" value="UniProtKB"/>
</dbReference>
<dbReference type="GO" id="GO:0046872">
    <property type="term" value="F:metal ion binding"/>
    <property type="evidence" value="ECO:0007669"/>
    <property type="project" value="UniProtKB-KW"/>
</dbReference>
<dbReference type="GO" id="GO:0042803">
    <property type="term" value="F:protein homodimerization activity"/>
    <property type="evidence" value="ECO:0000250"/>
    <property type="project" value="UniProtKB"/>
</dbReference>
<dbReference type="GO" id="GO:0030170">
    <property type="term" value="F:pyridoxal phosphate binding"/>
    <property type="evidence" value="ECO:0000250"/>
    <property type="project" value="UniProtKB"/>
</dbReference>
<dbReference type="GO" id="GO:0006879">
    <property type="term" value="P:intracellular iron ion homeostasis"/>
    <property type="evidence" value="ECO:0000318"/>
    <property type="project" value="GO_Central"/>
</dbReference>
<dbReference type="GO" id="GO:0051604">
    <property type="term" value="P:protein maturation"/>
    <property type="evidence" value="ECO:0000250"/>
    <property type="project" value="UniProtKB"/>
</dbReference>
<dbReference type="GO" id="GO:0010506">
    <property type="term" value="P:regulation of autophagy"/>
    <property type="evidence" value="ECO:0007669"/>
    <property type="project" value="InterPro"/>
</dbReference>
<dbReference type="GO" id="GO:0043457">
    <property type="term" value="P:regulation of cellular respiration"/>
    <property type="evidence" value="ECO:0000266"/>
    <property type="project" value="RGD"/>
</dbReference>
<dbReference type="FunFam" id="3.40.5.90:FF:000001">
    <property type="entry name" value="CDGSH iron-sulfur domain-containing protein 1"/>
    <property type="match status" value="1"/>
</dbReference>
<dbReference type="Gene3D" id="3.40.5.90">
    <property type="entry name" value="CDGSH iron-sulfur domain, mitoNEET-type"/>
    <property type="match status" value="1"/>
</dbReference>
<dbReference type="InterPro" id="IPR045131">
    <property type="entry name" value="CISD1/2"/>
</dbReference>
<dbReference type="InterPro" id="IPR018967">
    <property type="entry name" value="FeS-contain_CDGSH-typ"/>
</dbReference>
<dbReference type="InterPro" id="IPR019610">
    <property type="entry name" value="FeS-contain_mitoNEET_N"/>
</dbReference>
<dbReference type="InterPro" id="IPR042216">
    <property type="entry name" value="MitoNEET_CISD"/>
</dbReference>
<dbReference type="PANTHER" id="PTHR13680">
    <property type="entry name" value="CDGSH IRON-SULFUR DOMAIN-CONTAINING PROTEIN 1"/>
    <property type="match status" value="1"/>
</dbReference>
<dbReference type="PANTHER" id="PTHR13680:SF5">
    <property type="entry name" value="CDGSH IRON-SULFUR DOMAIN-CONTAINING PROTEIN 1"/>
    <property type="match status" value="1"/>
</dbReference>
<dbReference type="Pfam" id="PF10660">
    <property type="entry name" value="MitoNEET_N"/>
    <property type="match status" value="1"/>
</dbReference>
<dbReference type="Pfam" id="PF09360">
    <property type="entry name" value="zf-CDGSH"/>
    <property type="match status" value="1"/>
</dbReference>
<dbReference type="SMART" id="SM00704">
    <property type="entry name" value="ZnF_CDGSH"/>
    <property type="match status" value="1"/>
</dbReference>
<comment type="function">
    <text evidence="1 2">L-cysteine transaminase that catalyzes the reversible transfer of the amino group from L-cysteine to the alpha-keto acid 2-oxoglutarate to respectively form 2-oxo-3-sulfanylpropanoate and L-glutamate (By similarity). The catalytic cycle occurs in the presence of pyridoxal 5'-phosphate (PLP) cofactor that facilitates transamination by initially forming an internal aldimine with the epsilon-amino group of active site Lys-55 residue on the enzyme (PLP-enzyme aldimine), subsequently displaced by formation of an external aldimine with the substrate amino group (PLP-L-cysteine aldimine). The external aldimine is further deprotonated to form a carbanion intermediate, which in the presence of 2-oxoglutarate regenerates PLP yielding final products 2-oxo-3-sulfanylpropanoate and L-glutamate. The proton transfer in carbanion intermediate is suggested to be controlled by the active site lysine residue, whereas PLP stabilizes carbanion structure through electron delocalization, also known as the electron sink effect (By similarity). Plays a key role in regulating maximal capacity for electron transport and oxidative phosphorylation (By similarity). May be involved in iron-sulfur cluster shuttling and/or in redox reactions. Can transfer the [2Fe-2S] cluster to an apo-acceptor protein only when in the oxidation state, likely serving as a redox sensor that regulates mitochondrial iron-sulfur cluster assembly and iron trafficking upon oxidative stress (By similarity).</text>
</comment>
<comment type="catalytic activity">
    <reaction evidence="2">
        <text>L-cysteine + 2-oxoglutarate = 2-oxo-3-sulfanylpropanoate + L-glutamate</text>
        <dbReference type="Rhea" id="RHEA:17441"/>
        <dbReference type="ChEBI" id="CHEBI:16810"/>
        <dbReference type="ChEBI" id="CHEBI:29985"/>
        <dbReference type="ChEBI" id="CHEBI:35235"/>
        <dbReference type="ChEBI" id="CHEBI:57678"/>
        <dbReference type="EC" id="2.6.1.3"/>
    </reaction>
    <physiologicalReaction direction="left-to-right" evidence="2">
        <dbReference type="Rhea" id="RHEA:17442"/>
    </physiologicalReaction>
    <physiologicalReaction direction="right-to-left" evidence="2">
        <dbReference type="Rhea" id="RHEA:17443"/>
    </physiologicalReaction>
</comment>
<comment type="cofactor">
    <cofactor evidence="2">
        <name>[2Fe-2S] cluster</name>
        <dbReference type="ChEBI" id="CHEBI:190135"/>
    </cofactor>
    <text evidence="2">Binds 1 [2Fe-2S] cluster per subunit. The [2Fe-2S] cluster is redox-active and pH labile and is significantly less stable at pH 4.5 as compared with pH 7.0.</text>
</comment>
<comment type="cofactor">
    <cofactor evidence="2">
        <name>pyridoxal 5'-phosphate</name>
        <dbReference type="ChEBI" id="CHEBI:597326"/>
    </cofactor>
</comment>
<comment type="subunit">
    <text evidence="2">Homodimer.</text>
</comment>
<comment type="subcellular location">
    <subcellularLocation>
        <location evidence="2">Mitochondrion outer membrane</location>
        <topology evidence="2">Single-pass type III membrane protein</topology>
    </subcellularLocation>
</comment>
<comment type="PTM">
    <text evidence="2">Ubiquitinated by PRKN during mitophagy, leading to its degradation and enhancement of mitophagy. Deubiquitinated by USP30.</text>
</comment>
<comment type="similarity">
    <text evidence="4">Belongs to the CISD protein family.</text>
</comment>
<reference key="1">
    <citation type="submission" date="2005-07" db="EMBL/GenBank/DDBJ databases">
        <authorList>
            <person name="Mural R.J."/>
            <person name="Adams M.D."/>
            <person name="Myers E.W."/>
            <person name="Smith H.O."/>
            <person name="Venter J.C."/>
        </authorList>
    </citation>
    <scope>NUCLEOTIDE SEQUENCE [LARGE SCALE GENOMIC DNA]</scope>
</reference>
<reference key="2">
    <citation type="journal article" date="2004" name="Genome Res.">
        <title>The status, quality, and expansion of the NIH full-length cDNA project: the Mammalian Gene Collection (MGC).</title>
        <authorList>
            <consortium name="The MGC Project Team"/>
        </authorList>
    </citation>
    <scope>NUCLEOTIDE SEQUENCE [LARGE SCALE MRNA]</scope>
    <source>
        <tissue>Brain</tissue>
    </source>
</reference>
<keyword id="KW-0001">2Fe-2S</keyword>
<keyword id="KW-0007">Acetylation</keyword>
<keyword id="KW-0408">Iron</keyword>
<keyword id="KW-0411">Iron-sulfur</keyword>
<keyword id="KW-1017">Isopeptide bond</keyword>
<keyword id="KW-0472">Membrane</keyword>
<keyword id="KW-0479">Metal-binding</keyword>
<keyword id="KW-0496">Mitochondrion</keyword>
<keyword id="KW-1000">Mitochondrion outer membrane</keyword>
<keyword id="KW-1185">Reference proteome</keyword>
<keyword id="KW-0704">Schiff base</keyword>
<keyword id="KW-0735">Signal-anchor</keyword>
<keyword id="KW-0808">Transferase</keyword>
<keyword id="KW-0812">Transmembrane</keyword>
<keyword id="KW-1133">Transmembrane helix</keyword>
<keyword id="KW-0832">Ubl conjugation</keyword>
<feature type="chain" id="PRO_0000354705" description="CDGSH iron-sulfur domain-containing protein 1">
    <location>
        <begin position="1"/>
        <end position="108"/>
    </location>
</feature>
<feature type="transmembrane region" description="Helical; Signal-anchor for type III membrane protein" evidence="3">
    <location>
        <begin position="13"/>
        <end position="31"/>
    </location>
</feature>
<feature type="topological domain" description="Cytoplasmic" evidence="3">
    <location>
        <begin position="32"/>
        <end position="108"/>
    </location>
</feature>
<feature type="active site" description="Schiff-base intermediate with pyridoxal 5'-phosphate" evidence="2">
    <location>
        <position position="55"/>
    </location>
</feature>
<feature type="binding site" evidence="2">
    <location>
        <position position="72"/>
    </location>
    <ligand>
        <name>[2Fe-2S] cluster</name>
        <dbReference type="ChEBI" id="CHEBI:190135"/>
    </ligand>
</feature>
<feature type="binding site" evidence="2">
    <location>
        <position position="74"/>
    </location>
    <ligand>
        <name>[2Fe-2S] cluster</name>
        <dbReference type="ChEBI" id="CHEBI:190135"/>
    </ligand>
</feature>
<feature type="binding site" evidence="2">
    <location>
        <position position="83"/>
    </location>
    <ligand>
        <name>[2Fe-2S] cluster</name>
        <dbReference type="ChEBI" id="CHEBI:190135"/>
    </ligand>
</feature>
<feature type="binding site" evidence="2">
    <location>
        <position position="87"/>
    </location>
    <ligand>
        <name>[2Fe-2S] cluster</name>
        <dbReference type="ChEBI" id="CHEBI:190135"/>
    </ligand>
</feature>
<feature type="modified residue" description="N6-acetyllysine; alternate" evidence="1">
    <location>
        <position position="55"/>
    </location>
</feature>
<feature type="modified residue" description="N6-acetyllysine; alternate" evidence="1">
    <location>
        <position position="68"/>
    </location>
</feature>
<feature type="modified residue" description="N6-acetyllysine; alternate" evidence="1">
    <location>
        <position position="104"/>
    </location>
</feature>
<feature type="cross-link" description="Glycyl lysine isopeptide (Lys-Gly) (interchain with G-Cter in ubiquitin)" evidence="2">
    <location>
        <position position="42"/>
    </location>
</feature>
<feature type="cross-link" description="Glycyl lysine isopeptide (Lys-Gly) (interchain with G-Cter in ubiquitin); alternate" evidence="2">
    <location>
        <position position="55"/>
    </location>
</feature>
<feature type="cross-link" description="Glycyl lysine isopeptide (Lys-Gly) (interchain with G-Cter in ubiquitin); alternate" evidence="2">
    <location>
        <position position="68"/>
    </location>
</feature>
<feature type="cross-link" description="Glycyl lysine isopeptide (Lys-Gly) (interchain with G-Cter in ubiquitin)" evidence="2">
    <location>
        <position position="78"/>
    </location>
</feature>
<feature type="cross-link" description="Glycyl lysine isopeptide (Lys-Gly) (interchain with G-Cter in ubiquitin)" evidence="2">
    <location>
        <position position="79"/>
    </location>
</feature>
<feature type="cross-link" description="Glycyl lysine isopeptide (Lys-Gly) (interchain with G-Cter in ubiquitin)" evidence="2">
    <location>
        <position position="89"/>
    </location>
</feature>
<feature type="cross-link" description="Glycyl lysine isopeptide (Lys-Gly) (interchain with G-Cter in ubiquitin); alternate" evidence="2">
    <location>
        <position position="104"/>
    </location>
</feature>
<feature type="cross-link" description="Glycyl lysine isopeptide (Lys-Gly) (interchain with G-Cter in ubiquitin)" evidence="2">
    <location>
        <position position="105"/>
    </location>
</feature>
<feature type="cross-link" description="Glycyl lysine isopeptide (Lys-Gly) (interchain with G-Cter in ubiquitin)" evidence="2">
    <location>
        <position position="106"/>
    </location>
</feature>
<evidence type="ECO:0000250" key="1">
    <source>
        <dbReference type="UniProtKB" id="Q91WS0"/>
    </source>
</evidence>
<evidence type="ECO:0000250" key="2">
    <source>
        <dbReference type="UniProtKB" id="Q9NZ45"/>
    </source>
</evidence>
<evidence type="ECO:0000255" key="3"/>
<evidence type="ECO:0000305" key="4"/>
<accession>B0K020</accession>